<sequence>MLSARNRMRRSTEFDATVRQGVRTVQPDVIVHVRRAKECAADSSPRVGLIIAKSVGTAVERHRVARRLRHVARPMLMNLHPCDRVVIRALPSSRHVSSAWLEQQLRSGLRRAFESAGADR</sequence>
<organism>
    <name type="scientific">Mycobacterium ulcerans (strain Agy99)</name>
    <dbReference type="NCBI Taxonomy" id="362242"/>
    <lineage>
        <taxon>Bacteria</taxon>
        <taxon>Bacillati</taxon>
        <taxon>Actinomycetota</taxon>
        <taxon>Actinomycetes</taxon>
        <taxon>Mycobacteriales</taxon>
        <taxon>Mycobacteriaceae</taxon>
        <taxon>Mycobacterium</taxon>
        <taxon>Mycobacterium ulcerans group</taxon>
    </lineage>
</organism>
<reference key="1">
    <citation type="journal article" date="2007" name="Genome Res.">
        <title>Reductive evolution and niche adaptation inferred from the genome of Mycobacterium ulcerans, the causative agent of Buruli ulcer.</title>
        <authorList>
            <person name="Stinear T.P."/>
            <person name="Seemann T."/>
            <person name="Pidot S."/>
            <person name="Frigui W."/>
            <person name="Reysset G."/>
            <person name="Garnier T."/>
            <person name="Meurice G."/>
            <person name="Simon D."/>
            <person name="Bouchier C."/>
            <person name="Ma L."/>
            <person name="Tichit M."/>
            <person name="Porter J.L."/>
            <person name="Ryan J."/>
            <person name="Johnson P.D.R."/>
            <person name="Davies J.K."/>
            <person name="Jenkin G.A."/>
            <person name="Small P.L.C."/>
            <person name="Jones L.M."/>
            <person name="Tekaia F."/>
            <person name="Laval F."/>
            <person name="Daffe M."/>
            <person name="Parkhill J."/>
            <person name="Cole S.T."/>
        </authorList>
    </citation>
    <scope>NUCLEOTIDE SEQUENCE [LARGE SCALE GENOMIC DNA]</scope>
    <source>
        <strain>Agy99</strain>
    </source>
</reference>
<evidence type="ECO:0000255" key="1">
    <source>
        <dbReference type="HAMAP-Rule" id="MF_00227"/>
    </source>
</evidence>
<comment type="function">
    <text evidence="1">RNaseP catalyzes the removal of the 5'-leader sequence from pre-tRNA to produce the mature 5'-terminus. It can also cleave other RNA substrates such as 4.5S RNA. The protein component plays an auxiliary but essential role in vivo by binding to the 5'-leader sequence and broadening the substrate specificity of the ribozyme.</text>
</comment>
<comment type="catalytic activity">
    <reaction evidence="1">
        <text>Endonucleolytic cleavage of RNA, removing 5'-extranucleotides from tRNA precursor.</text>
        <dbReference type="EC" id="3.1.26.5"/>
    </reaction>
</comment>
<comment type="subunit">
    <text evidence="1">Consists of a catalytic RNA component (M1 or rnpB) and a protein subunit.</text>
</comment>
<comment type="similarity">
    <text evidence="1">Belongs to the RnpA family.</text>
</comment>
<keyword id="KW-0255">Endonuclease</keyword>
<keyword id="KW-0378">Hydrolase</keyword>
<keyword id="KW-0540">Nuclease</keyword>
<keyword id="KW-0694">RNA-binding</keyword>
<keyword id="KW-0819">tRNA processing</keyword>
<proteinExistence type="inferred from homology"/>
<protein>
    <recommendedName>
        <fullName evidence="1">Ribonuclease P protein component</fullName>
        <shortName evidence="1">RNase P protein</shortName>
        <shortName evidence="1">RNaseP protein</shortName>
        <ecNumber evidence="1">3.1.26.5</ecNumber>
    </recommendedName>
    <alternativeName>
        <fullName evidence="1">Protein C5</fullName>
    </alternativeName>
</protein>
<gene>
    <name evidence="1" type="primary">rnpA</name>
    <name type="ordered locus">MUL_5076</name>
</gene>
<accession>A0PX70</accession>
<dbReference type="EC" id="3.1.26.5" evidence="1"/>
<dbReference type="EMBL" id="CP000325">
    <property type="protein sequence ID" value="ABL06939.1"/>
    <property type="molecule type" value="Genomic_DNA"/>
</dbReference>
<dbReference type="RefSeq" id="WP_011742529.1">
    <property type="nucleotide sequence ID" value="NC_008611.1"/>
</dbReference>
<dbReference type="SMR" id="A0PX70"/>
<dbReference type="KEGG" id="mul:MUL_5076"/>
<dbReference type="eggNOG" id="COG0594">
    <property type="taxonomic scope" value="Bacteria"/>
</dbReference>
<dbReference type="HOGENOM" id="CLU_117179_4_1_11"/>
<dbReference type="Proteomes" id="UP000000765">
    <property type="component" value="Chromosome"/>
</dbReference>
<dbReference type="GO" id="GO:0030677">
    <property type="term" value="C:ribonuclease P complex"/>
    <property type="evidence" value="ECO:0007669"/>
    <property type="project" value="TreeGrafter"/>
</dbReference>
<dbReference type="GO" id="GO:0042781">
    <property type="term" value="F:3'-tRNA processing endoribonuclease activity"/>
    <property type="evidence" value="ECO:0007669"/>
    <property type="project" value="TreeGrafter"/>
</dbReference>
<dbReference type="GO" id="GO:0004526">
    <property type="term" value="F:ribonuclease P activity"/>
    <property type="evidence" value="ECO:0007669"/>
    <property type="project" value="UniProtKB-UniRule"/>
</dbReference>
<dbReference type="GO" id="GO:0000049">
    <property type="term" value="F:tRNA binding"/>
    <property type="evidence" value="ECO:0007669"/>
    <property type="project" value="UniProtKB-UniRule"/>
</dbReference>
<dbReference type="GO" id="GO:0001682">
    <property type="term" value="P:tRNA 5'-leader removal"/>
    <property type="evidence" value="ECO:0007669"/>
    <property type="project" value="UniProtKB-UniRule"/>
</dbReference>
<dbReference type="Gene3D" id="3.30.230.10">
    <property type="match status" value="1"/>
</dbReference>
<dbReference type="HAMAP" id="MF_00227">
    <property type="entry name" value="RNase_P"/>
    <property type="match status" value="1"/>
</dbReference>
<dbReference type="InterPro" id="IPR020568">
    <property type="entry name" value="Ribosomal_Su5_D2-typ_SF"/>
</dbReference>
<dbReference type="InterPro" id="IPR014721">
    <property type="entry name" value="Ribsml_uS5_D2-typ_fold_subgr"/>
</dbReference>
<dbReference type="InterPro" id="IPR000100">
    <property type="entry name" value="RNase_P"/>
</dbReference>
<dbReference type="InterPro" id="IPR020539">
    <property type="entry name" value="RNase_P_CS"/>
</dbReference>
<dbReference type="NCBIfam" id="TIGR00188">
    <property type="entry name" value="rnpA"/>
    <property type="match status" value="1"/>
</dbReference>
<dbReference type="PANTHER" id="PTHR33992">
    <property type="entry name" value="RIBONUCLEASE P PROTEIN COMPONENT"/>
    <property type="match status" value="1"/>
</dbReference>
<dbReference type="PANTHER" id="PTHR33992:SF1">
    <property type="entry name" value="RIBONUCLEASE P PROTEIN COMPONENT"/>
    <property type="match status" value="1"/>
</dbReference>
<dbReference type="Pfam" id="PF00825">
    <property type="entry name" value="Ribonuclease_P"/>
    <property type="match status" value="1"/>
</dbReference>
<dbReference type="SUPFAM" id="SSF54211">
    <property type="entry name" value="Ribosomal protein S5 domain 2-like"/>
    <property type="match status" value="1"/>
</dbReference>
<dbReference type="PROSITE" id="PS00648">
    <property type="entry name" value="RIBONUCLEASE_P"/>
    <property type="match status" value="1"/>
</dbReference>
<feature type="chain" id="PRO_1000021434" description="Ribonuclease P protein component">
    <location>
        <begin position="1"/>
        <end position="120"/>
    </location>
</feature>
<name>RNPA_MYCUA</name>